<organism>
    <name type="scientific">Pyrobaculum neutrophilum (strain DSM 2338 / JCM 9278 / NBRC 100436 / V24Sta)</name>
    <name type="common">Thermoproteus neutrophilus</name>
    <dbReference type="NCBI Taxonomy" id="444157"/>
    <lineage>
        <taxon>Archaea</taxon>
        <taxon>Thermoproteota</taxon>
        <taxon>Thermoprotei</taxon>
        <taxon>Thermoproteales</taxon>
        <taxon>Thermoproteaceae</taxon>
        <taxon>Pyrobaculum</taxon>
    </lineage>
</organism>
<dbReference type="EC" id="6.1.1.15" evidence="1"/>
<dbReference type="EMBL" id="CP001014">
    <property type="protein sequence ID" value="ACB40292.1"/>
    <property type="molecule type" value="Genomic_DNA"/>
</dbReference>
<dbReference type="RefSeq" id="WP_012350711.1">
    <property type="nucleotide sequence ID" value="NC_010525.1"/>
</dbReference>
<dbReference type="SMR" id="B1Y963"/>
<dbReference type="STRING" id="444157.Tneu_1366"/>
<dbReference type="GeneID" id="6164516"/>
<dbReference type="KEGG" id="tne:Tneu_1366"/>
<dbReference type="eggNOG" id="arCOG00402">
    <property type="taxonomic scope" value="Archaea"/>
</dbReference>
<dbReference type="HOGENOM" id="CLU_001882_4_2_2"/>
<dbReference type="OrthoDB" id="7375at2157"/>
<dbReference type="Proteomes" id="UP000001694">
    <property type="component" value="Chromosome"/>
</dbReference>
<dbReference type="GO" id="GO:0017101">
    <property type="term" value="C:aminoacyl-tRNA synthetase multienzyme complex"/>
    <property type="evidence" value="ECO:0007669"/>
    <property type="project" value="TreeGrafter"/>
</dbReference>
<dbReference type="GO" id="GO:0005737">
    <property type="term" value="C:cytoplasm"/>
    <property type="evidence" value="ECO:0007669"/>
    <property type="project" value="UniProtKB-SubCell"/>
</dbReference>
<dbReference type="GO" id="GO:0005524">
    <property type="term" value="F:ATP binding"/>
    <property type="evidence" value="ECO:0007669"/>
    <property type="project" value="UniProtKB-UniRule"/>
</dbReference>
<dbReference type="GO" id="GO:0004827">
    <property type="term" value="F:proline-tRNA ligase activity"/>
    <property type="evidence" value="ECO:0007669"/>
    <property type="project" value="UniProtKB-UniRule"/>
</dbReference>
<dbReference type="GO" id="GO:0006433">
    <property type="term" value="P:prolyl-tRNA aminoacylation"/>
    <property type="evidence" value="ECO:0007669"/>
    <property type="project" value="UniProtKB-UniRule"/>
</dbReference>
<dbReference type="CDD" id="cd00862">
    <property type="entry name" value="ProRS_anticodon_zinc"/>
    <property type="match status" value="1"/>
</dbReference>
<dbReference type="FunFam" id="3.40.50.800:FF:000005">
    <property type="entry name" value="bifunctional glutamate/proline--tRNA ligase"/>
    <property type="match status" value="1"/>
</dbReference>
<dbReference type="FunFam" id="3.30.930.10:FF:000037">
    <property type="entry name" value="Proline--tRNA ligase"/>
    <property type="match status" value="1"/>
</dbReference>
<dbReference type="Gene3D" id="3.40.50.800">
    <property type="entry name" value="Anticodon-binding domain"/>
    <property type="match status" value="1"/>
</dbReference>
<dbReference type="Gene3D" id="3.30.930.10">
    <property type="entry name" value="Bira Bifunctional Protein, Domain 2"/>
    <property type="match status" value="1"/>
</dbReference>
<dbReference type="Gene3D" id="3.30.110.30">
    <property type="entry name" value="C-terminal domain of ProRS"/>
    <property type="match status" value="1"/>
</dbReference>
<dbReference type="HAMAP" id="MF_01571">
    <property type="entry name" value="Pro_tRNA_synth_type3"/>
    <property type="match status" value="1"/>
</dbReference>
<dbReference type="InterPro" id="IPR002314">
    <property type="entry name" value="aa-tRNA-synt_IIb"/>
</dbReference>
<dbReference type="InterPro" id="IPR006195">
    <property type="entry name" value="aa-tRNA-synth_II"/>
</dbReference>
<dbReference type="InterPro" id="IPR045864">
    <property type="entry name" value="aa-tRNA-synth_II/BPL/LPL"/>
</dbReference>
<dbReference type="InterPro" id="IPR004154">
    <property type="entry name" value="Anticodon-bd"/>
</dbReference>
<dbReference type="InterPro" id="IPR036621">
    <property type="entry name" value="Anticodon-bd_dom_sf"/>
</dbReference>
<dbReference type="InterPro" id="IPR002316">
    <property type="entry name" value="Pro-tRNA-ligase_IIa"/>
</dbReference>
<dbReference type="InterPro" id="IPR004499">
    <property type="entry name" value="Pro-tRNA-ligase_IIa_arc-type"/>
</dbReference>
<dbReference type="InterPro" id="IPR016061">
    <property type="entry name" value="Pro-tRNA_ligase_II_C"/>
</dbReference>
<dbReference type="InterPro" id="IPR017449">
    <property type="entry name" value="Pro-tRNA_synth_II"/>
</dbReference>
<dbReference type="NCBIfam" id="TIGR00408">
    <property type="entry name" value="proS_fam_I"/>
    <property type="match status" value="1"/>
</dbReference>
<dbReference type="PANTHER" id="PTHR43382:SF2">
    <property type="entry name" value="BIFUNCTIONAL GLUTAMATE_PROLINE--TRNA LIGASE"/>
    <property type="match status" value="1"/>
</dbReference>
<dbReference type="PANTHER" id="PTHR43382">
    <property type="entry name" value="PROLYL-TRNA SYNTHETASE"/>
    <property type="match status" value="1"/>
</dbReference>
<dbReference type="Pfam" id="PF03129">
    <property type="entry name" value="HGTP_anticodon"/>
    <property type="match status" value="1"/>
</dbReference>
<dbReference type="Pfam" id="PF09180">
    <property type="entry name" value="ProRS-C_1"/>
    <property type="match status" value="1"/>
</dbReference>
<dbReference type="Pfam" id="PF00587">
    <property type="entry name" value="tRNA-synt_2b"/>
    <property type="match status" value="1"/>
</dbReference>
<dbReference type="PRINTS" id="PR01046">
    <property type="entry name" value="TRNASYNTHPRO"/>
</dbReference>
<dbReference type="SMART" id="SM00946">
    <property type="entry name" value="ProRS-C_1"/>
    <property type="match status" value="1"/>
</dbReference>
<dbReference type="SUPFAM" id="SSF64586">
    <property type="entry name" value="C-terminal domain of ProRS"/>
    <property type="match status" value="1"/>
</dbReference>
<dbReference type="SUPFAM" id="SSF52954">
    <property type="entry name" value="Class II aaRS ABD-related"/>
    <property type="match status" value="1"/>
</dbReference>
<dbReference type="SUPFAM" id="SSF55681">
    <property type="entry name" value="Class II aaRS and biotin synthetases"/>
    <property type="match status" value="1"/>
</dbReference>
<dbReference type="PROSITE" id="PS50862">
    <property type="entry name" value="AA_TRNA_LIGASE_II"/>
    <property type="match status" value="1"/>
</dbReference>
<reference key="1">
    <citation type="submission" date="2008-03" db="EMBL/GenBank/DDBJ databases">
        <title>Complete sequence of Thermoproteus neutrophilus V24Sta.</title>
        <authorList>
            <consortium name="US DOE Joint Genome Institute"/>
            <person name="Copeland A."/>
            <person name="Lucas S."/>
            <person name="Lapidus A."/>
            <person name="Glavina del Rio T."/>
            <person name="Dalin E."/>
            <person name="Tice H."/>
            <person name="Bruce D."/>
            <person name="Goodwin L."/>
            <person name="Pitluck S."/>
            <person name="Sims D."/>
            <person name="Brettin T."/>
            <person name="Detter J.C."/>
            <person name="Han C."/>
            <person name="Kuske C.R."/>
            <person name="Schmutz J."/>
            <person name="Larimer F."/>
            <person name="Land M."/>
            <person name="Hauser L."/>
            <person name="Kyrpides N."/>
            <person name="Mikhailova N."/>
            <person name="Biddle J.F."/>
            <person name="Zhang Z."/>
            <person name="Fitz-Gibbon S.T."/>
            <person name="Lowe T.M."/>
            <person name="Saltikov C."/>
            <person name="House C.H."/>
            <person name="Richardson P."/>
        </authorList>
    </citation>
    <scope>NUCLEOTIDE SEQUENCE [LARGE SCALE GENOMIC DNA]</scope>
    <source>
        <strain>DSM 2338 / JCM 9278 / NBRC 100436 / V24Sta</strain>
    </source>
</reference>
<comment type="function">
    <text evidence="1">Catalyzes the attachment of proline to tRNA(Pro) in a two-step reaction: proline is first activated by ATP to form Pro-AMP and then transferred to the acceptor end of tRNA(Pro).</text>
</comment>
<comment type="catalytic activity">
    <reaction evidence="1">
        <text>tRNA(Pro) + L-proline + ATP = L-prolyl-tRNA(Pro) + AMP + diphosphate</text>
        <dbReference type="Rhea" id="RHEA:14305"/>
        <dbReference type="Rhea" id="RHEA-COMP:9700"/>
        <dbReference type="Rhea" id="RHEA-COMP:9702"/>
        <dbReference type="ChEBI" id="CHEBI:30616"/>
        <dbReference type="ChEBI" id="CHEBI:33019"/>
        <dbReference type="ChEBI" id="CHEBI:60039"/>
        <dbReference type="ChEBI" id="CHEBI:78442"/>
        <dbReference type="ChEBI" id="CHEBI:78532"/>
        <dbReference type="ChEBI" id="CHEBI:456215"/>
        <dbReference type="EC" id="6.1.1.15"/>
    </reaction>
</comment>
<comment type="subunit">
    <text evidence="1">Homodimer.</text>
</comment>
<comment type="subcellular location">
    <subcellularLocation>
        <location evidence="1">Cytoplasm</location>
    </subcellularLocation>
</comment>
<comment type="domain">
    <text evidence="1">Consists of three domains: the N-terminal catalytic domain, the anticodon-binding domain and the C-terminal extension.</text>
</comment>
<comment type="similarity">
    <text evidence="1">Belongs to the class-II aminoacyl-tRNA synthetase family. ProS type 3 subfamily.</text>
</comment>
<proteinExistence type="inferred from homology"/>
<protein>
    <recommendedName>
        <fullName evidence="1">Proline--tRNA ligase</fullName>
        <ecNumber evidence="1">6.1.1.15</ecNumber>
    </recommendedName>
    <alternativeName>
        <fullName evidence="1">Prolyl-tRNA synthetase</fullName>
        <shortName evidence="1">ProRS</shortName>
    </alternativeName>
</protein>
<accession>B1Y963</accession>
<gene>
    <name evidence="1" type="primary">proS</name>
    <name type="ordered locus">Tneu_1366</name>
</gene>
<sequence length="487" mass="56465">MELLRSARPHPKEKLKNVIEWFHWLLREAELYDVRYPVKGAYVWRPYGMKLRRNVEELIRRVHDETGHEEVLFPVFIPYEFFGKESQHIRGFEKEVFWVSKGGEGGERLVLRPTSETAIMPMVKLWIQDYKDLPLRLYQIVSVFRAETKMTHPMIRLREISMFKEAHTVHVDREDAERQVREAVEIYKRIFDEMCLAYMINKRPDWDKFAGAEYTIAFDTVLPDGRTLQIGTAHYLGTNFTRVFEVTYLDADGTRKLAHTTSYGISERSIAAMLITHGDDGGTTLPPKLAPIQIAVVPIYYSDEEMPLVMKFVEEVVAALKGAGLRLHVDDRRDKTPGWKFYYWELKGVPLRLEVGKRDVEKRQVVVTRRDTLEKYAVALGELVDAVRELMKAVEDNLRRRAWEELRSKIVKVQSLEEAKKAIKEGKVVEVPWSGDNQCGMKIQELLGADALGIPMDSEASIGGYDARDLACGERRAELWLRLSERY</sequence>
<feature type="chain" id="PRO_1000215581" description="Proline--tRNA ligase">
    <location>
        <begin position="1"/>
        <end position="487"/>
    </location>
</feature>
<name>SYP_PYRNV</name>
<evidence type="ECO:0000255" key="1">
    <source>
        <dbReference type="HAMAP-Rule" id="MF_01571"/>
    </source>
</evidence>
<keyword id="KW-0030">Aminoacyl-tRNA synthetase</keyword>
<keyword id="KW-0067">ATP-binding</keyword>
<keyword id="KW-0963">Cytoplasm</keyword>
<keyword id="KW-0436">Ligase</keyword>
<keyword id="KW-0547">Nucleotide-binding</keyword>
<keyword id="KW-0648">Protein biosynthesis</keyword>